<feature type="chain" id="PRO_0000132679" description="Small ribosomal subunit protein uS4c">
    <location>
        <begin position="1" status="less than"/>
        <end position="195" status="greater than"/>
    </location>
</feature>
<feature type="domain" description="S4 RNA-binding">
    <location>
        <begin position="82"/>
        <end position="143"/>
    </location>
</feature>
<feature type="non-terminal residue">
    <location>
        <position position="1"/>
    </location>
</feature>
<feature type="non-terminal residue">
    <location>
        <position position="195"/>
    </location>
</feature>
<name>RR4_WATAN</name>
<protein>
    <recommendedName>
        <fullName evidence="2">Small ribosomal subunit protein uS4c</fullName>
    </recommendedName>
    <alternativeName>
        <fullName>30S ribosomal protein S4, chloroplastic</fullName>
    </alternativeName>
</protein>
<organism>
    <name type="scientific">Watsonia angusta</name>
    <dbReference type="NCBI Taxonomy" id="58981"/>
    <lineage>
        <taxon>Eukaryota</taxon>
        <taxon>Viridiplantae</taxon>
        <taxon>Streptophyta</taxon>
        <taxon>Embryophyta</taxon>
        <taxon>Tracheophyta</taxon>
        <taxon>Spermatophyta</taxon>
        <taxon>Magnoliopsida</taxon>
        <taxon>Liliopsida</taxon>
        <taxon>Asparagales</taxon>
        <taxon>Iridaceae</taxon>
        <taxon>Crocoideae</taxon>
        <taxon>Watsonieae</taxon>
        <taxon>Watsonia</taxon>
    </lineage>
</organism>
<gene>
    <name type="primary">rps4</name>
</gene>
<comment type="function">
    <text evidence="1">One of the primary rRNA binding proteins, it binds directly to 16S rRNA where it nucleates assembly of the body of the 30S subunit.</text>
</comment>
<comment type="function">
    <text evidence="1">With S5 and S12 plays an important role in translational accuracy.</text>
</comment>
<comment type="subunit">
    <text evidence="1">Part of the 30S ribosomal subunit. Contacts protein S5. The interaction surface between S4 and S5 is involved in control of translational fidelity (By similarity).</text>
</comment>
<comment type="subcellular location">
    <subcellularLocation>
        <location>Plastid</location>
        <location>Chloroplast</location>
    </subcellularLocation>
</comment>
<comment type="similarity">
    <text evidence="2">Belongs to the universal ribosomal protein uS4 family.</text>
</comment>
<geneLocation type="chloroplast"/>
<keyword id="KW-0150">Chloroplast</keyword>
<keyword id="KW-0934">Plastid</keyword>
<keyword id="KW-0687">Ribonucleoprotein</keyword>
<keyword id="KW-0689">Ribosomal protein</keyword>
<keyword id="KW-0694">RNA-binding</keyword>
<keyword id="KW-0699">rRNA-binding</keyword>
<proteinExistence type="inferred from homology"/>
<sequence length="195" mass="22576">RFKKIRRLGALPGLTSKRPRSGSDLKNQLRSGKRSQYRIRLEEKQKLRFHYGLTELQLLKYVHIAGKAKGSTGQILLQLLEMRLDNILFRLGMASTIPGARQLVNHRHILVNGRIVDIPSYRCKPRDIITTKNKQRSKALIQNFIASSPHQEELPNHLTIDPFQYKGLVNQIIDSKWIGLKINELLVVEYYSRQT</sequence>
<accession>O20399</accession>
<dbReference type="EMBL" id="Z68265">
    <property type="protein sequence ID" value="CAA92563.1"/>
    <property type="molecule type" value="Genomic_DNA"/>
</dbReference>
<dbReference type="SMR" id="O20399"/>
<dbReference type="GO" id="GO:0009507">
    <property type="term" value="C:chloroplast"/>
    <property type="evidence" value="ECO:0007669"/>
    <property type="project" value="UniProtKB-SubCell"/>
</dbReference>
<dbReference type="GO" id="GO:0015935">
    <property type="term" value="C:small ribosomal subunit"/>
    <property type="evidence" value="ECO:0007669"/>
    <property type="project" value="InterPro"/>
</dbReference>
<dbReference type="GO" id="GO:0019843">
    <property type="term" value="F:rRNA binding"/>
    <property type="evidence" value="ECO:0007669"/>
    <property type="project" value="UniProtKB-KW"/>
</dbReference>
<dbReference type="GO" id="GO:0003735">
    <property type="term" value="F:structural constituent of ribosome"/>
    <property type="evidence" value="ECO:0007669"/>
    <property type="project" value="InterPro"/>
</dbReference>
<dbReference type="GO" id="GO:0042274">
    <property type="term" value="P:ribosomal small subunit biogenesis"/>
    <property type="evidence" value="ECO:0007669"/>
    <property type="project" value="TreeGrafter"/>
</dbReference>
<dbReference type="GO" id="GO:0006412">
    <property type="term" value="P:translation"/>
    <property type="evidence" value="ECO:0007669"/>
    <property type="project" value="InterPro"/>
</dbReference>
<dbReference type="CDD" id="cd00165">
    <property type="entry name" value="S4"/>
    <property type="match status" value="1"/>
</dbReference>
<dbReference type="FunFam" id="1.10.1050.10:FF:000002">
    <property type="entry name" value="30S ribosomal protein S4, chloroplastic"/>
    <property type="match status" value="1"/>
</dbReference>
<dbReference type="FunFam" id="3.10.290.10:FF:000081">
    <property type="entry name" value="30S ribosomal protein S4, chloroplastic"/>
    <property type="match status" value="1"/>
</dbReference>
<dbReference type="Gene3D" id="1.10.1050.10">
    <property type="entry name" value="Ribosomal Protein S4 Delta 41, Chain A, domain 1"/>
    <property type="match status" value="1"/>
</dbReference>
<dbReference type="Gene3D" id="3.10.290.10">
    <property type="entry name" value="RNA-binding S4 domain"/>
    <property type="match status" value="1"/>
</dbReference>
<dbReference type="HAMAP" id="MF_01306_B">
    <property type="entry name" value="Ribosomal_uS4_B"/>
    <property type="match status" value="1"/>
</dbReference>
<dbReference type="InterPro" id="IPR022801">
    <property type="entry name" value="Ribosomal_uS4"/>
</dbReference>
<dbReference type="InterPro" id="IPR005709">
    <property type="entry name" value="Ribosomal_uS4_bac-type"/>
</dbReference>
<dbReference type="InterPro" id="IPR018079">
    <property type="entry name" value="Ribosomal_uS4_CS"/>
</dbReference>
<dbReference type="InterPro" id="IPR001912">
    <property type="entry name" value="Ribosomal_uS4_N"/>
</dbReference>
<dbReference type="InterPro" id="IPR002942">
    <property type="entry name" value="S4_RNA-bd"/>
</dbReference>
<dbReference type="InterPro" id="IPR036986">
    <property type="entry name" value="S4_RNA-bd_sf"/>
</dbReference>
<dbReference type="NCBIfam" id="NF003717">
    <property type="entry name" value="PRK05327.1"/>
    <property type="match status" value="1"/>
</dbReference>
<dbReference type="NCBIfam" id="TIGR01017">
    <property type="entry name" value="rpsD_bact"/>
    <property type="match status" value="1"/>
</dbReference>
<dbReference type="PANTHER" id="PTHR11831">
    <property type="entry name" value="30S 40S RIBOSOMAL PROTEIN"/>
    <property type="match status" value="1"/>
</dbReference>
<dbReference type="PANTHER" id="PTHR11831:SF4">
    <property type="entry name" value="SMALL RIBOSOMAL SUBUNIT PROTEIN US4M"/>
    <property type="match status" value="1"/>
</dbReference>
<dbReference type="Pfam" id="PF00163">
    <property type="entry name" value="Ribosomal_S4"/>
    <property type="match status" value="1"/>
</dbReference>
<dbReference type="Pfam" id="PF01479">
    <property type="entry name" value="S4"/>
    <property type="match status" value="1"/>
</dbReference>
<dbReference type="SMART" id="SM01390">
    <property type="entry name" value="Ribosomal_S4"/>
    <property type="match status" value="1"/>
</dbReference>
<dbReference type="SMART" id="SM00363">
    <property type="entry name" value="S4"/>
    <property type="match status" value="1"/>
</dbReference>
<dbReference type="SUPFAM" id="SSF55174">
    <property type="entry name" value="Alpha-L RNA-binding motif"/>
    <property type="match status" value="1"/>
</dbReference>
<dbReference type="PROSITE" id="PS00632">
    <property type="entry name" value="RIBOSOMAL_S4"/>
    <property type="match status" value="1"/>
</dbReference>
<dbReference type="PROSITE" id="PS50889">
    <property type="entry name" value="S4"/>
    <property type="match status" value="1"/>
</dbReference>
<reference key="1">
    <citation type="journal article" date="1997" name="Plant Syst. Evol.">
        <title>Phylogenetic analysis of Iridaceae with parsimony and distance methods using the plastid gene rps4.</title>
        <authorList>
            <person name="Souza-Chies T.T."/>
            <person name="Bittar G."/>
            <person name="Nadot S."/>
            <person name="Carter L."/>
            <person name="Besin E."/>
            <person name="Lejeune B.P."/>
        </authorList>
    </citation>
    <scope>NUCLEOTIDE SEQUENCE [GENOMIC DNA]</scope>
</reference>
<evidence type="ECO:0000250" key="1"/>
<evidence type="ECO:0000305" key="2"/>